<proteinExistence type="inferred from homology"/>
<name>GCSH_PSYA2</name>
<protein>
    <recommendedName>
        <fullName evidence="1">Glycine cleavage system H protein</fullName>
    </recommendedName>
</protein>
<comment type="function">
    <text evidence="1">The glycine cleavage system catalyzes the degradation of glycine. The H protein shuttles the methylamine group of glycine from the P protein to the T protein.</text>
</comment>
<comment type="cofactor">
    <cofactor evidence="1">
        <name>(R)-lipoate</name>
        <dbReference type="ChEBI" id="CHEBI:83088"/>
    </cofactor>
    <text evidence="1">Binds 1 lipoyl cofactor covalently.</text>
</comment>
<comment type="subunit">
    <text evidence="1">The glycine cleavage system is composed of four proteins: P, T, L and H.</text>
</comment>
<comment type="similarity">
    <text evidence="1">Belongs to the GcvH family.</text>
</comment>
<sequence length="126" mass="13886">MSNIPAELKYIASHEWLRLEDDGTITVGITDHAQDLLGDVVFVELPDVGDIIAVDDEISVVESVKAASDVYAPISGEVVAINEALEDDPEIINSDPYGEGWFFRMKPDNIADYEALLTADEYENEL</sequence>
<keyword id="KW-0450">Lipoyl</keyword>
<keyword id="KW-1185">Reference proteome</keyword>
<reference key="1">
    <citation type="journal article" date="2010" name="Appl. Environ. Microbiol.">
        <title>The genome sequence of Psychrobacter arcticus 273-4, a psychroactive Siberian permafrost bacterium, reveals mechanisms for adaptation to low-temperature growth.</title>
        <authorList>
            <person name="Ayala-del-Rio H.L."/>
            <person name="Chain P.S."/>
            <person name="Grzymski J.J."/>
            <person name="Ponder M.A."/>
            <person name="Ivanova N."/>
            <person name="Bergholz P.W."/>
            <person name="Di Bartolo G."/>
            <person name="Hauser L."/>
            <person name="Land M."/>
            <person name="Bakermans C."/>
            <person name="Rodrigues D."/>
            <person name="Klappenbach J."/>
            <person name="Zarka D."/>
            <person name="Larimer F."/>
            <person name="Richardson P."/>
            <person name="Murray A."/>
            <person name="Thomashow M."/>
            <person name="Tiedje J.M."/>
        </authorList>
    </citation>
    <scope>NUCLEOTIDE SEQUENCE [LARGE SCALE GENOMIC DNA]</scope>
    <source>
        <strain>DSM 17307 / VKM B-2377 / 273-4</strain>
    </source>
</reference>
<accession>Q4FTK7</accession>
<gene>
    <name evidence="1" type="primary">gcvH</name>
    <name type="ordered locus">Psyc_0798</name>
</gene>
<dbReference type="EMBL" id="CP000082">
    <property type="protein sequence ID" value="AAZ18651.1"/>
    <property type="molecule type" value="Genomic_DNA"/>
</dbReference>
<dbReference type="RefSeq" id="WP_011280078.1">
    <property type="nucleotide sequence ID" value="NC_007204.1"/>
</dbReference>
<dbReference type="SMR" id="Q4FTK7"/>
<dbReference type="STRING" id="259536.Psyc_0798"/>
<dbReference type="GeneID" id="60255045"/>
<dbReference type="KEGG" id="par:Psyc_0798"/>
<dbReference type="eggNOG" id="COG0509">
    <property type="taxonomic scope" value="Bacteria"/>
</dbReference>
<dbReference type="HOGENOM" id="CLU_097408_2_1_6"/>
<dbReference type="OrthoDB" id="9796712at2"/>
<dbReference type="Proteomes" id="UP000000546">
    <property type="component" value="Chromosome"/>
</dbReference>
<dbReference type="GO" id="GO:0005829">
    <property type="term" value="C:cytosol"/>
    <property type="evidence" value="ECO:0007669"/>
    <property type="project" value="TreeGrafter"/>
</dbReference>
<dbReference type="GO" id="GO:0005960">
    <property type="term" value="C:glycine cleavage complex"/>
    <property type="evidence" value="ECO:0007669"/>
    <property type="project" value="InterPro"/>
</dbReference>
<dbReference type="GO" id="GO:0019464">
    <property type="term" value="P:glycine decarboxylation via glycine cleavage system"/>
    <property type="evidence" value="ECO:0007669"/>
    <property type="project" value="UniProtKB-UniRule"/>
</dbReference>
<dbReference type="CDD" id="cd06848">
    <property type="entry name" value="GCS_H"/>
    <property type="match status" value="1"/>
</dbReference>
<dbReference type="Gene3D" id="2.40.50.100">
    <property type="match status" value="1"/>
</dbReference>
<dbReference type="HAMAP" id="MF_00272">
    <property type="entry name" value="GcvH"/>
    <property type="match status" value="1"/>
</dbReference>
<dbReference type="InterPro" id="IPR003016">
    <property type="entry name" value="2-oxoA_DH_lipoyl-BS"/>
</dbReference>
<dbReference type="InterPro" id="IPR000089">
    <property type="entry name" value="Biotin_lipoyl"/>
</dbReference>
<dbReference type="InterPro" id="IPR002930">
    <property type="entry name" value="GCV_H"/>
</dbReference>
<dbReference type="InterPro" id="IPR033753">
    <property type="entry name" value="GCV_H/Fam206"/>
</dbReference>
<dbReference type="InterPro" id="IPR017453">
    <property type="entry name" value="GCV_H_sub"/>
</dbReference>
<dbReference type="InterPro" id="IPR011053">
    <property type="entry name" value="Single_hybrid_motif"/>
</dbReference>
<dbReference type="NCBIfam" id="TIGR00527">
    <property type="entry name" value="gcvH"/>
    <property type="match status" value="1"/>
</dbReference>
<dbReference type="NCBIfam" id="NF002270">
    <property type="entry name" value="PRK01202.1"/>
    <property type="match status" value="1"/>
</dbReference>
<dbReference type="PANTHER" id="PTHR11715">
    <property type="entry name" value="GLYCINE CLEAVAGE SYSTEM H PROTEIN"/>
    <property type="match status" value="1"/>
</dbReference>
<dbReference type="PANTHER" id="PTHR11715:SF3">
    <property type="entry name" value="GLYCINE CLEAVAGE SYSTEM H PROTEIN-RELATED"/>
    <property type="match status" value="1"/>
</dbReference>
<dbReference type="Pfam" id="PF01597">
    <property type="entry name" value="GCV_H"/>
    <property type="match status" value="1"/>
</dbReference>
<dbReference type="SUPFAM" id="SSF51230">
    <property type="entry name" value="Single hybrid motif"/>
    <property type="match status" value="1"/>
</dbReference>
<dbReference type="PROSITE" id="PS50968">
    <property type="entry name" value="BIOTINYL_LIPOYL"/>
    <property type="match status" value="1"/>
</dbReference>
<dbReference type="PROSITE" id="PS00189">
    <property type="entry name" value="LIPOYL"/>
    <property type="match status" value="1"/>
</dbReference>
<evidence type="ECO:0000255" key="1">
    <source>
        <dbReference type="HAMAP-Rule" id="MF_00272"/>
    </source>
</evidence>
<evidence type="ECO:0000255" key="2">
    <source>
        <dbReference type="PROSITE-ProRule" id="PRU01066"/>
    </source>
</evidence>
<feature type="chain" id="PRO_0000302421" description="Glycine cleavage system H protein">
    <location>
        <begin position="1"/>
        <end position="126"/>
    </location>
</feature>
<feature type="domain" description="Lipoyl-binding" evidence="2">
    <location>
        <begin position="24"/>
        <end position="106"/>
    </location>
</feature>
<feature type="modified residue" description="N6-lipoyllysine" evidence="1">
    <location>
        <position position="65"/>
    </location>
</feature>
<organism>
    <name type="scientific">Psychrobacter arcticus (strain DSM 17307 / VKM B-2377 / 273-4)</name>
    <dbReference type="NCBI Taxonomy" id="259536"/>
    <lineage>
        <taxon>Bacteria</taxon>
        <taxon>Pseudomonadati</taxon>
        <taxon>Pseudomonadota</taxon>
        <taxon>Gammaproteobacteria</taxon>
        <taxon>Moraxellales</taxon>
        <taxon>Moraxellaceae</taxon>
        <taxon>Psychrobacter</taxon>
    </lineage>
</organism>